<protein>
    <recommendedName>
        <fullName evidence="7">Serine/threonine-protein kinase PCRK2</fullName>
        <ecNumber evidence="8">2.7.11.1</ecNumber>
    </recommendedName>
    <alternativeName>
        <fullName evidence="7">Protein PTI-COMPROMISED RECEPTOR-LIKE CYTOPLASMIC KINASE 2</fullName>
    </alternativeName>
</protein>
<dbReference type="EC" id="2.7.11.1" evidence="8"/>
<dbReference type="EMBL" id="AB005240">
    <property type="protein sequence ID" value="BAB08392.1"/>
    <property type="molecule type" value="Genomic_DNA"/>
</dbReference>
<dbReference type="EMBL" id="AL162751">
    <property type="protein sequence ID" value="CAB83288.1"/>
    <property type="molecule type" value="Genomic_DNA"/>
</dbReference>
<dbReference type="EMBL" id="CP002688">
    <property type="protein sequence ID" value="AED90584.1"/>
    <property type="molecule type" value="Genomic_DNA"/>
</dbReference>
<dbReference type="EMBL" id="CP002688">
    <property type="protein sequence ID" value="ANM68777.1"/>
    <property type="molecule type" value="Genomic_DNA"/>
</dbReference>
<dbReference type="EMBL" id="BT028916">
    <property type="protein sequence ID" value="ABI49463.1"/>
    <property type="molecule type" value="mRNA"/>
</dbReference>
<dbReference type="PIR" id="T48353">
    <property type="entry name" value="T48353"/>
</dbReference>
<dbReference type="RefSeq" id="NP_001330499.1">
    <property type="nucleotide sequence ID" value="NM_001342698.1"/>
</dbReference>
<dbReference type="RefSeq" id="NP_195952.1">
    <property type="nucleotide sequence ID" value="NM_120410.5"/>
</dbReference>
<dbReference type="SMR" id="Q9LZF8"/>
<dbReference type="FunCoup" id="Q9LZF8">
    <property type="interactions" value="266"/>
</dbReference>
<dbReference type="STRING" id="3702.Q9LZF8"/>
<dbReference type="iPTMnet" id="Q9LZF8"/>
<dbReference type="PaxDb" id="3702-AT5G03320.1"/>
<dbReference type="ProteomicsDB" id="236848"/>
<dbReference type="EnsemblPlants" id="AT5G03320.1">
    <property type="protein sequence ID" value="AT5G03320.1"/>
    <property type="gene ID" value="AT5G03320"/>
</dbReference>
<dbReference type="EnsemblPlants" id="AT5G03320.2">
    <property type="protein sequence ID" value="AT5G03320.2"/>
    <property type="gene ID" value="AT5G03320"/>
</dbReference>
<dbReference type="GeneID" id="831876"/>
<dbReference type="Gramene" id="AT5G03320.1">
    <property type="protein sequence ID" value="AT5G03320.1"/>
    <property type="gene ID" value="AT5G03320"/>
</dbReference>
<dbReference type="Gramene" id="AT5G03320.2">
    <property type="protein sequence ID" value="AT5G03320.2"/>
    <property type="gene ID" value="AT5G03320"/>
</dbReference>
<dbReference type="KEGG" id="ath:AT5G03320"/>
<dbReference type="Araport" id="AT5G03320"/>
<dbReference type="TAIR" id="AT5G03320">
    <property type="gene designation" value="PCRK2"/>
</dbReference>
<dbReference type="eggNOG" id="KOG1187">
    <property type="taxonomic scope" value="Eukaryota"/>
</dbReference>
<dbReference type="HOGENOM" id="CLU_000288_21_13_1"/>
<dbReference type="InParanoid" id="Q9LZF8"/>
<dbReference type="OMA" id="DENWNSK"/>
<dbReference type="OrthoDB" id="4062651at2759"/>
<dbReference type="PhylomeDB" id="Q9LZF8"/>
<dbReference type="PRO" id="PR:Q9LZF8"/>
<dbReference type="Proteomes" id="UP000006548">
    <property type="component" value="Chromosome 5"/>
</dbReference>
<dbReference type="ExpressionAtlas" id="Q9LZF8">
    <property type="expression patterns" value="baseline and differential"/>
</dbReference>
<dbReference type="GO" id="GO:0005886">
    <property type="term" value="C:plasma membrane"/>
    <property type="evidence" value="ECO:0000314"/>
    <property type="project" value="TAIR"/>
</dbReference>
<dbReference type="GO" id="GO:0005524">
    <property type="term" value="F:ATP binding"/>
    <property type="evidence" value="ECO:0007669"/>
    <property type="project" value="UniProtKB-KW"/>
</dbReference>
<dbReference type="GO" id="GO:0106310">
    <property type="term" value="F:protein serine kinase activity"/>
    <property type="evidence" value="ECO:0007669"/>
    <property type="project" value="RHEA"/>
</dbReference>
<dbReference type="GO" id="GO:0004674">
    <property type="term" value="F:protein serine/threonine kinase activity"/>
    <property type="evidence" value="ECO:0007669"/>
    <property type="project" value="UniProtKB-EC"/>
</dbReference>
<dbReference type="GO" id="GO:0006952">
    <property type="term" value="P:defense response"/>
    <property type="evidence" value="ECO:0007669"/>
    <property type="project" value="UniProtKB-KW"/>
</dbReference>
<dbReference type="GO" id="GO:0002221">
    <property type="term" value="P:pattern recognition receptor signaling pathway"/>
    <property type="evidence" value="ECO:0000315"/>
    <property type="project" value="TAIR"/>
</dbReference>
<dbReference type="GO" id="GO:0080142">
    <property type="term" value="P:regulation of salicylic acid biosynthetic process"/>
    <property type="evidence" value="ECO:0000315"/>
    <property type="project" value="TAIR"/>
</dbReference>
<dbReference type="CDD" id="cd14066">
    <property type="entry name" value="STKc_IRAK"/>
    <property type="match status" value="1"/>
</dbReference>
<dbReference type="FunFam" id="3.30.200.20:FF:000228">
    <property type="entry name" value="Serine/threonine-protein kinase BIK1"/>
    <property type="match status" value="1"/>
</dbReference>
<dbReference type="FunFam" id="1.10.510.10:FF:000715">
    <property type="entry name" value="Serine/threonine-protein kinase PCRK2"/>
    <property type="match status" value="1"/>
</dbReference>
<dbReference type="Gene3D" id="3.30.200.20">
    <property type="entry name" value="Phosphorylase Kinase, domain 1"/>
    <property type="match status" value="1"/>
</dbReference>
<dbReference type="Gene3D" id="1.10.510.10">
    <property type="entry name" value="Transferase(Phosphotransferase) domain 1"/>
    <property type="match status" value="1"/>
</dbReference>
<dbReference type="InterPro" id="IPR011009">
    <property type="entry name" value="Kinase-like_dom_sf"/>
</dbReference>
<dbReference type="InterPro" id="IPR050823">
    <property type="entry name" value="Plant_Ser_Thr_Prot_Kinase"/>
</dbReference>
<dbReference type="InterPro" id="IPR000719">
    <property type="entry name" value="Prot_kinase_dom"/>
</dbReference>
<dbReference type="InterPro" id="IPR017441">
    <property type="entry name" value="Protein_kinase_ATP_BS"/>
</dbReference>
<dbReference type="PANTHER" id="PTHR45621">
    <property type="entry name" value="OS01G0588500 PROTEIN-RELATED"/>
    <property type="match status" value="1"/>
</dbReference>
<dbReference type="Pfam" id="PF00069">
    <property type="entry name" value="Pkinase"/>
    <property type="match status" value="1"/>
</dbReference>
<dbReference type="SUPFAM" id="SSF56112">
    <property type="entry name" value="Protein kinase-like (PK-like)"/>
    <property type="match status" value="1"/>
</dbReference>
<dbReference type="PROSITE" id="PS00107">
    <property type="entry name" value="PROTEIN_KINASE_ATP"/>
    <property type="match status" value="1"/>
</dbReference>
<dbReference type="PROSITE" id="PS50011">
    <property type="entry name" value="PROTEIN_KINASE_DOM"/>
    <property type="match status" value="1"/>
</dbReference>
<organism>
    <name type="scientific">Arabidopsis thaliana</name>
    <name type="common">Mouse-ear cress</name>
    <dbReference type="NCBI Taxonomy" id="3702"/>
    <lineage>
        <taxon>Eukaryota</taxon>
        <taxon>Viridiplantae</taxon>
        <taxon>Streptophyta</taxon>
        <taxon>Embryophyta</taxon>
        <taxon>Tracheophyta</taxon>
        <taxon>Spermatophyta</taxon>
        <taxon>Magnoliopsida</taxon>
        <taxon>eudicotyledons</taxon>
        <taxon>Gunneridae</taxon>
        <taxon>Pentapetalae</taxon>
        <taxon>rosids</taxon>
        <taxon>malvids</taxon>
        <taxon>Brassicales</taxon>
        <taxon>Brassicaceae</taxon>
        <taxon>Camelineae</taxon>
        <taxon>Arabidopsis</taxon>
    </lineage>
</organism>
<gene>
    <name evidence="6" type="primary">PCRK2</name>
    <name evidence="9" type="ordered locus">At5g03320</name>
    <name evidence="10" type="ORF">F12E4_50</name>
</gene>
<sequence length="420" mass="47006">MKCFLFPLGDKKDEQRSPKPVSPTSNFSDVNKSGSDFSPRDVSGTSTVSSTGRNSNTSMSARENNLREFTIGDLKSATRNFSRSGMIGEGGFGCVFWGTIKNLEDPSKKIEVAVKQLGKRGLQGHKEWVTEVNFLGVVEHSNLVKLLGHCAEDDERGIQRLLVYEYMPNQSVEFHLSPRSPTVLTWDLRLRIAQDAARGLTYLHEEMDFQIIFRDFKSSNILLDENWTAKLSDFGLARLGPSPGSSHVSTDVVGTMGYAAPEYIQTGRLTSKSDVWGYGVFIYELITGRRPLDRNKPKGEQKLLEWVRPYLSDTRRFRLIVDPRLEGKYMIKSVQKLAVVANLCLTRNAKARPKMSEVLEMVTKIVEASSPGNGGKKPQLVPLKSQETSRVEEGKNKKVLDGAEGGWLEKLWNPKNVRAC</sequence>
<feature type="chain" id="PRO_0000442931" description="Serine/threonine-protein kinase PCRK2">
    <location>
        <begin position="1"/>
        <end position="420"/>
    </location>
</feature>
<feature type="domain" description="Protein kinase" evidence="2">
    <location>
        <begin position="81"/>
        <end position="366"/>
    </location>
</feature>
<feature type="region of interest" description="Disordered" evidence="3">
    <location>
        <begin position="1"/>
        <end position="64"/>
    </location>
</feature>
<feature type="region of interest" description="Disordered" evidence="3">
    <location>
        <begin position="369"/>
        <end position="396"/>
    </location>
</feature>
<feature type="compositionally biased region" description="Polar residues" evidence="3">
    <location>
        <begin position="22"/>
        <end position="36"/>
    </location>
</feature>
<feature type="compositionally biased region" description="Low complexity" evidence="3">
    <location>
        <begin position="42"/>
        <end position="58"/>
    </location>
</feature>
<feature type="compositionally biased region" description="Basic and acidic residues" evidence="3">
    <location>
        <begin position="387"/>
        <end position="396"/>
    </location>
</feature>
<feature type="active site" description="Proton acceptor" evidence="2">
    <location>
        <position position="215"/>
    </location>
</feature>
<feature type="binding site" evidence="2">
    <location>
        <begin position="87"/>
        <end position="95"/>
    </location>
    <ligand>
        <name>ATP</name>
        <dbReference type="ChEBI" id="CHEBI:30616"/>
    </ligand>
</feature>
<feature type="binding site" evidence="2">
    <location>
        <position position="115"/>
    </location>
    <ligand>
        <name>ATP</name>
        <dbReference type="ChEBI" id="CHEBI:30616"/>
    </ligand>
</feature>
<feature type="modified residue" description="Phosphothreonine" evidence="1">
    <location>
        <position position="70"/>
    </location>
</feature>
<feature type="modified residue" description="Phosphotyrosine" evidence="1">
    <location>
        <position position="164"/>
    </location>
</feature>
<feature type="modified residue" description="Phosphoserine" evidence="1">
    <location>
        <position position="219"/>
    </location>
</feature>
<feature type="modified residue" description="Phosphoserine" evidence="1">
    <location>
        <position position="249"/>
    </location>
</feature>
<feature type="modified residue" description="Phosphothreonine" evidence="1">
    <location>
        <position position="250"/>
    </location>
</feature>
<feature type="modified residue" description="Phosphothreonine" evidence="1">
    <location>
        <position position="255"/>
    </location>
</feature>
<feature type="modified residue" description="Phosphotyrosine" evidence="1">
    <location>
        <position position="263"/>
    </location>
</feature>
<feature type="mutagenesis site" description="Abolishes PCRK2 function in basal resistance against bacterial pathogens." evidence="5">
    <original>K</original>
    <variation>E</variation>
    <location>
        <position position="115"/>
    </location>
</feature>
<comment type="function">
    <text evidence="5">Functions redundantly with PCRK1 in basal resistance against bacterial pathogens and in regulation of plant immunity. Functions together with PCRK1 downstream of the pathogen-associated molecular pattern (PAMP) receptor FLS2. Contributes to the induction of SARD1 and CBP60G, which are transcriptional activator of ICS1, an enzyme involved in salicylate (SA) biosynthesis upon pathogen attack.</text>
</comment>
<comment type="catalytic activity">
    <reaction evidence="8">
        <text>L-seryl-[protein] + ATP = O-phospho-L-seryl-[protein] + ADP + H(+)</text>
        <dbReference type="Rhea" id="RHEA:17989"/>
        <dbReference type="Rhea" id="RHEA-COMP:9863"/>
        <dbReference type="Rhea" id="RHEA-COMP:11604"/>
        <dbReference type="ChEBI" id="CHEBI:15378"/>
        <dbReference type="ChEBI" id="CHEBI:29999"/>
        <dbReference type="ChEBI" id="CHEBI:30616"/>
        <dbReference type="ChEBI" id="CHEBI:83421"/>
        <dbReference type="ChEBI" id="CHEBI:456216"/>
        <dbReference type="EC" id="2.7.11.1"/>
    </reaction>
</comment>
<comment type="catalytic activity">
    <reaction evidence="8">
        <text>L-threonyl-[protein] + ATP = O-phospho-L-threonyl-[protein] + ADP + H(+)</text>
        <dbReference type="Rhea" id="RHEA:46608"/>
        <dbReference type="Rhea" id="RHEA-COMP:11060"/>
        <dbReference type="Rhea" id="RHEA-COMP:11605"/>
        <dbReference type="ChEBI" id="CHEBI:15378"/>
        <dbReference type="ChEBI" id="CHEBI:30013"/>
        <dbReference type="ChEBI" id="CHEBI:30616"/>
        <dbReference type="ChEBI" id="CHEBI:61977"/>
        <dbReference type="ChEBI" id="CHEBI:456216"/>
        <dbReference type="EC" id="2.7.11.1"/>
    </reaction>
</comment>
<comment type="subunit">
    <text evidence="5">Interacts with FLS2.</text>
</comment>
<comment type="subcellular location">
    <subcellularLocation>
        <location evidence="5">Cell membrane</location>
        <topology evidence="8">Peripheral membrane protein</topology>
    </subcellularLocation>
</comment>
<comment type="induction">
    <text evidence="4">Induced by infection with the bacterial pathogen Pseudomonas syringae pv maculicola strain ES4326.</text>
</comment>
<comment type="similarity">
    <text evidence="7">Belongs to the protein kinase superfamily. Ser/Thr protein kinase family.</text>
</comment>
<proteinExistence type="evidence at protein level"/>
<evidence type="ECO:0000250" key="1">
    <source>
        <dbReference type="UniProtKB" id="O48814"/>
    </source>
</evidence>
<evidence type="ECO:0000255" key="2">
    <source>
        <dbReference type="PROSITE-ProRule" id="PRU00159"/>
    </source>
</evidence>
<evidence type="ECO:0000256" key="3">
    <source>
        <dbReference type="SAM" id="MobiDB-lite"/>
    </source>
</evidence>
<evidence type="ECO:0000269" key="4">
    <source>
    </source>
</evidence>
<evidence type="ECO:0000269" key="5">
    <source>
    </source>
</evidence>
<evidence type="ECO:0000303" key="6">
    <source>
    </source>
</evidence>
<evidence type="ECO:0000305" key="7"/>
<evidence type="ECO:0000305" key="8">
    <source>
    </source>
</evidence>
<evidence type="ECO:0000312" key="9">
    <source>
        <dbReference type="Araport" id="AT5G03320"/>
    </source>
</evidence>
<evidence type="ECO:0000312" key="10">
    <source>
        <dbReference type="EMBL" id="CAB83288.1"/>
    </source>
</evidence>
<accession>Q9LZF8</accession>
<keyword id="KW-0067">ATP-binding</keyword>
<keyword id="KW-1003">Cell membrane</keyword>
<keyword id="KW-0418">Kinase</keyword>
<keyword id="KW-0472">Membrane</keyword>
<keyword id="KW-0547">Nucleotide-binding</keyword>
<keyword id="KW-0597">Phosphoprotein</keyword>
<keyword id="KW-0611">Plant defense</keyword>
<keyword id="KW-1185">Reference proteome</keyword>
<keyword id="KW-0808">Transferase</keyword>
<reference key="1">
    <citation type="journal article" date="1997" name="DNA Res.">
        <title>Structural analysis of Arabidopsis thaliana chromosome 5. I. Sequence features of the 1.6 Mb regions covered by twenty physically assigned P1 clones.</title>
        <authorList>
            <person name="Sato S."/>
            <person name="Kotani H."/>
            <person name="Nakamura Y."/>
            <person name="Kaneko T."/>
            <person name="Asamizu E."/>
            <person name="Fukami M."/>
            <person name="Miyajima N."/>
            <person name="Tabata S."/>
        </authorList>
    </citation>
    <scope>NUCLEOTIDE SEQUENCE [LARGE SCALE GENOMIC DNA]</scope>
    <source>
        <strain>cv. Columbia</strain>
    </source>
</reference>
<reference key="2">
    <citation type="journal article" date="2000" name="Nature">
        <title>Sequence and analysis of chromosome 5 of the plant Arabidopsis thaliana.</title>
        <authorList>
            <person name="Tabata S."/>
            <person name="Kaneko T."/>
            <person name="Nakamura Y."/>
            <person name="Kotani H."/>
            <person name="Kato T."/>
            <person name="Asamizu E."/>
            <person name="Miyajima N."/>
            <person name="Sasamoto S."/>
            <person name="Kimura T."/>
            <person name="Hosouchi T."/>
            <person name="Kawashima K."/>
            <person name="Kohara M."/>
            <person name="Matsumoto M."/>
            <person name="Matsuno A."/>
            <person name="Muraki A."/>
            <person name="Nakayama S."/>
            <person name="Nakazaki N."/>
            <person name="Naruo K."/>
            <person name="Okumura S."/>
            <person name="Shinpo S."/>
            <person name="Takeuchi C."/>
            <person name="Wada T."/>
            <person name="Watanabe A."/>
            <person name="Yamada M."/>
            <person name="Yasuda M."/>
            <person name="Sato S."/>
            <person name="de la Bastide M."/>
            <person name="Huang E."/>
            <person name="Spiegel L."/>
            <person name="Gnoj L."/>
            <person name="O'Shaughnessy A."/>
            <person name="Preston R."/>
            <person name="Habermann K."/>
            <person name="Murray J."/>
            <person name="Johnson D."/>
            <person name="Rohlfing T."/>
            <person name="Nelson J."/>
            <person name="Stoneking T."/>
            <person name="Pepin K."/>
            <person name="Spieth J."/>
            <person name="Sekhon M."/>
            <person name="Armstrong J."/>
            <person name="Becker M."/>
            <person name="Belter E."/>
            <person name="Cordum H."/>
            <person name="Cordes M."/>
            <person name="Courtney L."/>
            <person name="Courtney W."/>
            <person name="Dante M."/>
            <person name="Du H."/>
            <person name="Edwards J."/>
            <person name="Fryman J."/>
            <person name="Haakensen B."/>
            <person name="Lamar E."/>
            <person name="Latreille P."/>
            <person name="Leonard S."/>
            <person name="Meyer R."/>
            <person name="Mulvaney E."/>
            <person name="Ozersky P."/>
            <person name="Riley A."/>
            <person name="Strowmatt C."/>
            <person name="Wagner-McPherson C."/>
            <person name="Wollam A."/>
            <person name="Yoakum M."/>
            <person name="Bell M."/>
            <person name="Dedhia N."/>
            <person name="Parnell L."/>
            <person name="Shah R."/>
            <person name="Rodriguez M."/>
            <person name="Hoon See L."/>
            <person name="Vil D."/>
            <person name="Baker J."/>
            <person name="Kirchoff K."/>
            <person name="Toth K."/>
            <person name="King L."/>
            <person name="Bahret A."/>
            <person name="Miller B."/>
            <person name="Marra M.A."/>
            <person name="Martienssen R."/>
            <person name="McCombie W.R."/>
            <person name="Wilson R.K."/>
            <person name="Murphy G."/>
            <person name="Bancroft I."/>
            <person name="Volckaert G."/>
            <person name="Wambutt R."/>
            <person name="Duesterhoeft A."/>
            <person name="Stiekema W."/>
            <person name="Pohl T."/>
            <person name="Entian K.-D."/>
            <person name="Terryn N."/>
            <person name="Hartley N."/>
            <person name="Bent E."/>
            <person name="Johnson S."/>
            <person name="Langham S.-A."/>
            <person name="McCullagh B."/>
            <person name="Robben J."/>
            <person name="Grymonprez B."/>
            <person name="Zimmermann W."/>
            <person name="Ramsperger U."/>
            <person name="Wedler H."/>
            <person name="Balke K."/>
            <person name="Wedler E."/>
            <person name="Peters S."/>
            <person name="van Staveren M."/>
            <person name="Dirkse W."/>
            <person name="Mooijman P."/>
            <person name="Klein Lankhorst R."/>
            <person name="Weitzenegger T."/>
            <person name="Bothe G."/>
            <person name="Rose M."/>
            <person name="Hauf J."/>
            <person name="Berneiser S."/>
            <person name="Hempel S."/>
            <person name="Feldpausch M."/>
            <person name="Lamberth S."/>
            <person name="Villarroel R."/>
            <person name="Gielen J."/>
            <person name="Ardiles W."/>
            <person name="Bents O."/>
            <person name="Lemcke K."/>
            <person name="Kolesov G."/>
            <person name="Mayer K.F.X."/>
            <person name="Rudd S."/>
            <person name="Schoof H."/>
            <person name="Schueller C."/>
            <person name="Zaccaria P."/>
            <person name="Mewes H.-W."/>
            <person name="Bevan M."/>
            <person name="Fransz P.F."/>
        </authorList>
    </citation>
    <scope>NUCLEOTIDE SEQUENCE [LARGE SCALE GENOMIC DNA]</scope>
    <source>
        <strain>cv. Columbia</strain>
    </source>
</reference>
<reference key="3">
    <citation type="journal article" date="2017" name="Plant J.">
        <title>Araport11: a complete reannotation of the Arabidopsis thaliana reference genome.</title>
        <authorList>
            <person name="Cheng C.Y."/>
            <person name="Krishnakumar V."/>
            <person name="Chan A.P."/>
            <person name="Thibaud-Nissen F."/>
            <person name="Schobel S."/>
            <person name="Town C.D."/>
        </authorList>
    </citation>
    <scope>GENOME REANNOTATION</scope>
    <source>
        <strain>cv. Columbia</strain>
    </source>
</reference>
<reference key="4">
    <citation type="submission" date="2006-09" db="EMBL/GenBank/DDBJ databases">
        <title>Arabidopsis ORF Clones.</title>
        <authorList>
            <person name="Bautista V.R."/>
            <person name="Kim C.J."/>
            <person name="Chen H."/>
            <person name="Quinitio C."/>
            <person name="Ecker J.R."/>
        </authorList>
    </citation>
    <scope>NUCLEOTIDE SEQUENCE [LARGE SCALE MRNA]</scope>
    <source>
        <strain>cv. Columbia</strain>
    </source>
</reference>
<reference key="5">
    <citation type="journal article" date="2009" name="Plant Physiol.">
        <title>Large-scale Arabidopsis phosphoproteome profiling reveals novel chloroplast kinase substrates and phosphorylation networks.</title>
        <authorList>
            <person name="Reiland S."/>
            <person name="Messerli G."/>
            <person name="Baerenfaller K."/>
            <person name="Gerrits B."/>
            <person name="Endler A."/>
            <person name="Grossmann J."/>
            <person name="Gruissem W."/>
            <person name="Baginsky S."/>
        </authorList>
    </citation>
    <scope>IDENTIFICATION BY MASS SPECTROMETRY [LARGE SCALE ANALYSIS]</scope>
</reference>
<reference key="6">
    <citation type="journal article" date="2015" name="New Phytol.">
        <title>The receptor-like cytoplasmic kinase PCRK1 contributes to pattern-triggered immunity against Pseudomonas syringae in Arabidopsis thaliana.</title>
        <authorList>
            <person name="Sreekanta S."/>
            <person name="Bethke G."/>
            <person name="Hatsugai N."/>
            <person name="Tsuda K."/>
            <person name="Thao A."/>
            <person name="Wang L."/>
            <person name="Katagiri F."/>
            <person name="Glazebrook J."/>
        </authorList>
    </citation>
    <scope>INDUCTION BY BACTERIAL INFECTION</scope>
</reference>
<reference key="7">
    <citation type="journal article" date="2016" name="Plant Physiol.">
        <title>Two redundant receptor-like cytoplasmic kinases function downstream of pattern recognition receptors to regulate activation of SA biosynthesis.</title>
        <authorList>
            <person name="Kong Q."/>
            <person name="Sun T."/>
            <person name="Qu N."/>
            <person name="Ma J."/>
            <person name="Li M."/>
            <person name="Cheng Y.T."/>
            <person name="Zhang Q."/>
            <person name="Wu D."/>
            <person name="Zhang Z."/>
            <person name="Zhang Y."/>
        </authorList>
    </citation>
    <scope>FUNCTION</scope>
    <scope>CATALYTIC ACTIVITY</scope>
    <scope>INTERACTION WITH FLS2</scope>
    <scope>SUBCELLULAR LOCATION</scope>
    <scope>MUTAGENESIS OF LYS-115</scope>
</reference>
<name>PCRK2_ARATH</name>